<reference key="1">
    <citation type="journal article" date="2001" name="Nature">
        <title>Genome sequence of enterohaemorrhagic Escherichia coli O157:H7.</title>
        <authorList>
            <person name="Perna N.T."/>
            <person name="Plunkett G. III"/>
            <person name="Burland V."/>
            <person name="Mau B."/>
            <person name="Glasner J.D."/>
            <person name="Rose D.J."/>
            <person name="Mayhew G.F."/>
            <person name="Evans P.S."/>
            <person name="Gregor J."/>
            <person name="Kirkpatrick H.A."/>
            <person name="Posfai G."/>
            <person name="Hackett J."/>
            <person name="Klink S."/>
            <person name="Boutin A."/>
            <person name="Shao Y."/>
            <person name="Miller L."/>
            <person name="Grotbeck E.J."/>
            <person name="Davis N.W."/>
            <person name="Lim A."/>
            <person name="Dimalanta E.T."/>
            <person name="Potamousis K."/>
            <person name="Apodaca J."/>
            <person name="Anantharaman T.S."/>
            <person name="Lin J."/>
            <person name="Yen G."/>
            <person name="Schwartz D.C."/>
            <person name="Welch R.A."/>
            <person name="Blattner F.R."/>
        </authorList>
    </citation>
    <scope>NUCLEOTIDE SEQUENCE [LARGE SCALE GENOMIC DNA]</scope>
    <source>
        <strain>O157:H7 / EDL933 / ATCC 700927 / EHEC</strain>
    </source>
</reference>
<reference key="2">
    <citation type="journal article" date="2001" name="DNA Res.">
        <title>Complete genome sequence of enterohemorrhagic Escherichia coli O157:H7 and genomic comparison with a laboratory strain K-12.</title>
        <authorList>
            <person name="Hayashi T."/>
            <person name="Makino K."/>
            <person name="Ohnishi M."/>
            <person name="Kurokawa K."/>
            <person name="Ishii K."/>
            <person name="Yokoyama K."/>
            <person name="Han C.-G."/>
            <person name="Ohtsubo E."/>
            <person name="Nakayama K."/>
            <person name="Murata T."/>
            <person name="Tanaka M."/>
            <person name="Tobe T."/>
            <person name="Iida T."/>
            <person name="Takami H."/>
            <person name="Honda T."/>
            <person name="Sasakawa C."/>
            <person name="Ogasawara N."/>
            <person name="Yasunaga T."/>
            <person name="Kuhara S."/>
            <person name="Shiba T."/>
            <person name="Hattori M."/>
            <person name="Shinagawa H."/>
        </authorList>
    </citation>
    <scope>NUCLEOTIDE SEQUENCE [LARGE SCALE GENOMIC DNA]</scope>
    <source>
        <strain>O157:H7 / Sakai / RIMD 0509952 / EHEC</strain>
    </source>
</reference>
<name>RECF_ECO57</name>
<organism>
    <name type="scientific">Escherichia coli O157:H7</name>
    <dbReference type="NCBI Taxonomy" id="83334"/>
    <lineage>
        <taxon>Bacteria</taxon>
        <taxon>Pseudomonadati</taxon>
        <taxon>Pseudomonadota</taxon>
        <taxon>Gammaproteobacteria</taxon>
        <taxon>Enterobacterales</taxon>
        <taxon>Enterobacteriaceae</taxon>
        <taxon>Escherichia</taxon>
    </lineage>
</organism>
<evidence type="ECO:0000250" key="1"/>
<evidence type="ECO:0000255" key="2"/>
<evidence type="ECO:0000305" key="3"/>
<proteinExistence type="inferred from homology"/>
<protein>
    <recommendedName>
        <fullName>DNA replication and repair protein RecF</fullName>
    </recommendedName>
</protein>
<comment type="function">
    <text evidence="1">The RecF protein is involved in DNA metabolism; it is required for DNA replication and normal SOS inducibility. RecF binds preferentially to single-stranded, linear DNA. It also seems to bind ATP (By similarity).</text>
</comment>
<comment type="subcellular location">
    <subcellularLocation>
        <location evidence="1">Cytoplasm</location>
    </subcellularLocation>
</comment>
<comment type="similarity">
    <text evidence="3">Belongs to the RecF family.</text>
</comment>
<gene>
    <name type="primary">recF</name>
    <name type="synonym">uvrF</name>
    <name type="ordered locus">Z5191</name>
    <name type="ordered locus">ECs4635</name>
</gene>
<dbReference type="EMBL" id="AE005174">
    <property type="protein sequence ID" value="AAG58897.1"/>
    <property type="molecule type" value="Genomic_DNA"/>
</dbReference>
<dbReference type="EMBL" id="BA000007">
    <property type="protein sequence ID" value="BAB38058.1"/>
    <property type="molecule type" value="Genomic_DNA"/>
</dbReference>
<dbReference type="PIR" id="C91208">
    <property type="entry name" value="C91208"/>
</dbReference>
<dbReference type="PIR" id="E86054">
    <property type="entry name" value="E86054"/>
</dbReference>
<dbReference type="RefSeq" id="NP_312662.1">
    <property type="nucleotide sequence ID" value="NC_002695.1"/>
</dbReference>
<dbReference type="RefSeq" id="WP_000060112.1">
    <property type="nucleotide sequence ID" value="NZ_VOAI01000011.1"/>
</dbReference>
<dbReference type="SMR" id="P0A7H2"/>
<dbReference type="STRING" id="155864.Z5191"/>
<dbReference type="GeneID" id="915400"/>
<dbReference type="GeneID" id="93778441"/>
<dbReference type="KEGG" id="ece:Z5191"/>
<dbReference type="KEGG" id="ecs:ECs_4635"/>
<dbReference type="PATRIC" id="fig|386585.9.peg.4845"/>
<dbReference type="eggNOG" id="COG1195">
    <property type="taxonomic scope" value="Bacteria"/>
</dbReference>
<dbReference type="HOGENOM" id="CLU_040267_0_0_6"/>
<dbReference type="OMA" id="GESWSYA"/>
<dbReference type="Proteomes" id="UP000000558">
    <property type="component" value="Chromosome"/>
</dbReference>
<dbReference type="Proteomes" id="UP000002519">
    <property type="component" value="Chromosome"/>
</dbReference>
<dbReference type="GO" id="GO:0005737">
    <property type="term" value="C:cytoplasm"/>
    <property type="evidence" value="ECO:0007669"/>
    <property type="project" value="UniProtKB-SubCell"/>
</dbReference>
<dbReference type="GO" id="GO:0005524">
    <property type="term" value="F:ATP binding"/>
    <property type="evidence" value="ECO:0007669"/>
    <property type="project" value="UniProtKB-UniRule"/>
</dbReference>
<dbReference type="GO" id="GO:0003697">
    <property type="term" value="F:single-stranded DNA binding"/>
    <property type="evidence" value="ECO:0007669"/>
    <property type="project" value="UniProtKB-UniRule"/>
</dbReference>
<dbReference type="GO" id="GO:0006260">
    <property type="term" value="P:DNA replication"/>
    <property type="evidence" value="ECO:0007669"/>
    <property type="project" value="UniProtKB-UniRule"/>
</dbReference>
<dbReference type="GO" id="GO:0000731">
    <property type="term" value="P:DNA synthesis involved in DNA repair"/>
    <property type="evidence" value="ECO:0007669"/>
    <property type="project" value="TreeGrafter"/>
</dbReference>
<dbReference type="GO" id="GO:0006302">
    <property type="term" value="P:double-strand break repair"/>
    <property type="evidence" value="ECO:0007669"/>
    <property type="project" value="TreeGrafter"/>
</dbReference>
<dbReference type="GO" id="GO:0009432">
    <property type="term" value="P:SOS response"/>
    <property type="evidence" value="ECO:0007669"/>
    <property type="project" value="UniProtKB-UniRule"/>
</dbReference>
<dbReference type="FunFam" id="1.20.1050.90:FF:000001">
    <property type="entry name" value="DNA replication and repair protein RecF"/>
    <property type="match status" value="1"/>
</dbReference>
<dbReference type="Gene3D" id="3.40.50.300">
    <property type="entry name" value="P-loop containing nucleotide triphosphate hydrolases"/>
    <property type="match status" value="1"/>
</dbReference>
<dbReference type="Gene3D" id="1.20.1050.90">
    <property type="entry name" value="RecF/RecN/SMC, N-terminal domain"/>
    <property type="match status" value="1"/>
</dbReference>
<dbReference type="HAMAP" id="MF_00365">
    <property type="entry name" value="RecF"/>
    <property type="match status" value="1"/>
</dbReference>
<dbReference type="InterPro" id="IPR001238">
    <property type="entry name" value="DNA-binding_RecF"/>
</dbReference>
<dbReference type="InterPro" id="IPR018078">
    <property type="entry name" value="DNA-binding_RecF_CS"/>
</dbReference>
<dbReference type="InterPro" id="IPR027417">
    <property type="entry name" value="P-loop_NTPase"/>
</dbReference>
<dbReference type="InterPro" id="IPR003395">
    <property type="entry name" value="RecF/RecN/SMC_N"/>
</dbReference>
<dbReference type="InterPro" id="IPR042174">
    <property type="entry name" value="RecF_2"/>
</dbReference>
<dbReference type="NCBIfam" id="TIGR00611">
    <property type="entry name" value="recf"/>
    <property type="match status" value="1"/>
</dbReference>
<dbReference type="PANTHER" id="PTHR32182">
    <property type="entry name" value="DNA REPLICATION AND REPAIR PROTEIN RECF"/>
    <property type="match status" value="1"/>
</dbReference>
<dbReference type="PANTHER" id="PTHR32182:SF0">
    <property type="entry name" value="DNA REPLICATION AND REPAIR PROTEIN RECF"/>
    <property type="match status" value="1"/>
</dbReference>
<dbReference type="Pfam" id="PF02463">
    <property type="entry name" value="SMC_N"/>
    <property type="match status" value="1"/>
</dbReference>
<dbReference type="SUPFAM" id="SSF52540">
    <property type="entry name" value="P-loop containing nucleoside triphosphate hydrolases"/>
    <property type="match status" value="1"/>
</dbReference>
<dbReference type="PROSITE" id="PS00617">
    <property type="entry name" value="RECF_1"/>
    <property type="match status" value="1"/>
</dbReference>
<dbReference type="PROSITE" id="PS00618">
    <property type="entry name" value="RECF_2"/>
    <property type="match status" value="1"/>
</dbReference>
<keyword id="KW-0067">ATP-binding</keyword>
<keyword id="KW-0963">Cytoplasm</keyword>
<keyword id="KW-0227">DNA damage</keyword>
<keyword id="KW-0234">DNA repair</keyword>
<keyword id="KW-0235">DNA replication</keyword>
<keyword id="KW-0238">DNA-binding</keyword>
<keyword id="KW-0547">Nucleotide-binding</keyword>
<keyword id="KW-1185">Reference proteome</keyword>
<keyword id="KW-0742">SOS response</keyword>
<sequence>MSLTRLLIRDFRNIETADLALSPGFNFLVGANGSGKTSVLEAIYTLGHGRAFRSLQIGRVIRHEQEAFVLHGRLQGEERETAIGLTKDKQGDSKVRIDGTDGHKVAELAHLMPMQLITPEGFTLLNGGPKYRRAFLDWGCFHNEPGFFTAWSNLKRLLKQRNAALRQVTRYEQLRPWDKELIPLAEQISTWRAEYSAGIAADMADTCKQFLPEFSLTFSFQRGWEKETEYAEVLERNFERDRQLTYTAHGPHKADLRIRADGAPVEDTLSRGQLKLLMCALRLAQGEFLTRESGRRCLYLIDDFASELDDERRGLLASRLKATQSQVFVSAISAEHVIDMSDENSKMFTVEKGKITD</sequence>
<feature type="initiator methionine" description="Removed" evidence="1">
    <location>
        <position position="1"/>
    </location>
</feature>
<feature type="chain" id="PRO_0000196415" description="DNA replication and repair protein RecF">
    <location>
        <begin position="2"/>
        <end position="357"/>
    </location>
</feature>
<feature type="binding site" evidence="2">
    <location>
        <begin position="30"/>
        <end position="37"/>
    </location>
    <ligand>
        <name>ATP</name>
        <dbReference type="ChEBI" id="CHEBI:30616"/>
    </ligand>
</feature>
<accession>P0A7H2</accession>
<accession>P03016</accession>